<keyword id="KW-0067">ATP-binding</keyword>
<keyword id="KW-0963">Cytoplasm</keyword>
<keyword id="KW-0235">DNA replication</keyword>
<keyword id="KW-0238">DNA-binding</keyword>
<keyword id="KW-0446">Lipid-binding</keyword>
<keyword id="KW-0547">Nucleotide-binding</keyword>
<keyword id="KW-1185">Reference proteome</keyword>
<protein>
    <recommendedName>
        <fullName evidence="1">Chromosomal replication initiator protein DnaA</fullName>
    </recommendedName>
</protein>
<proteinExistence type="inferred from homology"/>
<comment type="function">
    <text evidence="1">Plays an essential role in the initiation and regulation of chromosomal replication. ATP-DnaA binds to the origin of replication (oriC) to initiate formation of the DNA replication initiation complex once per cell cycle. Binds the DnaA box (a 9 base pair repeat at the origin) and separates the double-stranded (ds)DNA. Forms a right-handed helical filament on oriC DNA; dsDNA binds to the exterior of the filament while single-stranded (ss)DNA is stabiized in the filament's interior. The ATP-DnaA-oriC complex binds and stabilizes one strand of the AT-rich DNA unwinding element (DUE), permitting loading of DNA polymerase. After initiation quickly degrades to an ADP-DnaA complex that is not apt for DNA replication. Binds acidic phospholipids.</text>
</comment>
<comment type="subunit">
    <text evidence="1">Oligomerizes as a right-handed, spiral filament on DNA at oriC.</text>
</comment>
<comment type="subcellular location">
    <subcellularLocation>
        <location evidence="1">Cytoplasm</location>
    </subcellularLocation>
</comment>
<comment type="domain">
    <text evidence="1">Domain I is involved in oligomerization and binding regulators, domain II is flexibile and of varying length in different bacteria, domain III forms the AAA+ region, while domain IV binds dsDNA.</text>
</comment>
<comment type="similarity">
    <text evidence="1">Belongs to the DnaA family.</text>
</comment>
<feature type="chain" id="PRO_1000048729" description="Chromosomal replication initiator protein DnaA">
    <location>
        <begin position="1"/>
        <end position="470"/>
    </location>
</feature>
<feature type="region of interest" description="Domain I, interacts with DnaA modulators" evidence="1">
    <location>
        <begin position="1"/>
        <end position="79"/>
    </location>
</feature>
<feature type="region of interest" description="Domain II" evidence="1">
    <location>
        <begin position="79"/>
        <end position="128"/>
    </location>
</feature>
<feature type="region of interest" description="Domain III, AAA+ region" evidence="1">
    <location>
        <begin position="129"/>
        <end position="350"/>
    </location>
</feature>
<feature type="region of interest" description="Domain IV, binds dsDNA" evidence="1">
    <location>
        <begin position="351"/>
        <end position="470"/>
    </location>
</feature>
<feature type="binding site" evidence="1">
    <location>
        <position position="173"/>
    </location>
    <ligand>
        <name>ATP</name>
        <dbReference type="ChEBI" id="CHEBI:30616"/>
    </ligand>
</feature>
<feature type="binding site" evidence="1">
    <location>
        <position position="175"/>
    </location>
    <ligand>
        <name>ATP</name>
        <dbReference type="ChEBI" id="CHEBI:30616"/>
    </ligand>
</feature>
<feature type="binding site" evidence="1">
    <location>
        <position position="176"/>
    </location>
    <ligand>
        <name>ATP</name>
        <dbReference type="ChEBI" id="CHEBI:30616"/>
    </ligand>
</feature>
<feature type="binding site" evidence="1">
    <location>
        <position position="177"/>
    </location>
    <ligand>
        <name>ATP</name>
        <dbReference type="ChEBI" id="CHEBI:30616"/>
    </ligand>
</feature>
<evidence type="ECO:0000255" key="1">
    <source>
        <dbReference type="HAMAP-Rule" id="MF_00377"/>
    </source>
</evidence>
<gene>
    <name evidence="1" type="primary">dnaA</name>
    <name type="ordered locus">TM1040_0001</name>
</gene>
<accession>Q1GKT2</accession>
<reference key="1">
    <citation type="submission" date="2006-05" db="EMBL/GenBank/DDBJ databases">
        <title>Complete sequence of chromosome of Silicibacter sp. TM1040.</title>
        <authorList>
            <consortium name="US DOE Joint Genome Institute"/>
            <person name="Copeland A."/>
            <person name="Lucas S."/>
            <person name="Lapidus A."/>
            <person name="Barry K."/>
            <person name="Detter J.C."/>
            <person name="Glavina del Rio T."/>
            <person name="Hammon N."/>
            <person name="Israni S."/>
            <person name="Dalin E."/>
            <person name="Tice H."/>
            <person name="Pitluck S."/>
            <person name="Brettin T."/>
            <person name="Bruce D."/>
            <person name="Han C."/>
            <person name="Tapia R."/>
            <person name="Goodwin L."/>
            <person name="Thompson L.S."/>
            <person name="Gilna P."/>
            <person name="Schmutz J."/>
            <person name="Larimer F."/>
            <person name="Land M."/>
            <person name="Hauser L."/>
            <person name="Kyrpides N."/>
            <person name="Kim E."/>
            <person name="Belas R."/>
            <person name="Moran M.A."/>
            <person name="Buchan A."/>
            <person name="Gonzalez J.M."/>
            <person name="Schell M.A."/>
            <person name="Sun F."/>
            <person name="Richardson P."/>
        </authorList>
    </citation>
    <scope>NUCLEOTIDE SEQUENCE [LARGE SCALE GENOMIC DNA]</scope>
    <source>
        <strain>TM1040</strain>
    </source>
</reference>
<organism>
    <name type="scientific">Ruegeria sp. (strain TM1040)</name>
    <name type="common">Silicibacter sp.</name>
    <dbReference type="NCBI Taxonomy" id="292414"/>
    <lineage>
        <taxon>Bacteria</taxon>
        <taxon>Pseudomonadati</taxon>
        <taxon>Pseudomonadota</taxon>
        <taxon>Alphaproteobacteria</taxon>
        <taxon>Rhodobacterales</taxon>
        <taxon>Roseobacteraceae</taxon>
        <taxon>Ruegeria</taxon>
    </lineage>
</organism>
<sequence>MTDDTWGLLRKRLLKTVGQNNFTTWIEPLELDQVDGGVATFHVPTNFMGNYVSQNFADLILHEFNKSGEAVQRLAFKVAANSPTRPVQPTMSEAIEEPAPLQTTVVDQLGNQEGNTSVKSPPEDLQAAPLDPRFTFDSFVVGKPNELAHAAARRVAEGGPVTFNPLVLYGGVGLGKTHLMHAIAWELKERNPELNVLYLSAEQFMYRFVQALRERKMMDFKHLFRSVDVLMVDDVQFIAGKDSTQEEFFHTFNALVDQNKQIIISADRAPGEIKDLEDRVKSRLQCGLVVDLHPTDYELRLGILQTKVQQNRKNYPDLKIADGVLELLAHRISTNVRVLEGALTRLFAFASLVGREIDMDLTQDCLADVLRASERKITVEEIQRKVSEYYNIRMSDIIGPKRLRSYARPRQVAMYLCKQLTSRSLPEIGRRFGGRDHTTVMHGVRRIEELKTIDGQIAEDVEMLRRSLEA</sequence>
<name>DNAA_RUEST</name>
<dbReference type="EMBL" id="CP000377">
    <property type="protein sequence ID" value="ABF62734.1"/>
    <property type="molecule type" value="Genomic_DNA"/>
</dbReference>
<dbReference type="RefSeq" id="WP_011537372.1">
    <property type="nucleotide sequence ID" value="NC_008044.1"/>
</dbReference>
<dbReference type="SMR" id="Q1GKT2"/>
<dbReference type="STRING" id="292414.TM1040_0001"/>
<dbReference type="KEGG" id="sit:TM1040_0001"/>
<dbReference type="eggNOG" id="COG0593">
    <property type="taxonomic scope" value="Bacteria"/>
</dbReference>
<dbReference type="HOGENOM" id="CLU_026910_3_0_5"/>
<dbReference type="OrthoDB" id="9807019at2"/>
<dbReference type="Proteomes" id="UP000000636">
    <property type="component" value="Chromosome"/>
</dbReference>
<dbReference type="GO" id="GO:0005737">
    <property type="term" value="C:cytoplasm"/>
    <property type="evidence" value="ECO:0007669"/>
    <property type="project" value="UniProtKB-SubCell"/>
</dbReference>
<dbReference type="GO" id="GO:0005886">
    <property type="term" value="C:plasma membrane"/>
    <property type="evidence" value="ECO:0007669"/>
    <property type="project" value="TreeGrafter"/>
</dbReference>
<dbReference type="GO" id="GO:0005524">
    <property type="term" value="F:ATP binding"/>
    <property type="evidence" value="ECO:0007669"/>
    <property type="project" value="UniProtKB-UniRule"/>
</dbReference>
<dbReference type="GO" id="GO:0016887">
    <property type="term" value="F:ATP hydrolysis activity"/>
    <property type="evidence" value="ECO:0007669"/>
    <property type="project" value="InterPro"/>
</dbReference>
<dbReference type="GO" id="GO:0003688">
    <property type="term" value="F:DNA replication origin binding"/>
    <property type="evidence" value="ECO:0007669"/>
    <property type="project" value="UniProtKB-UniRule"/>
</dbReference>
<dbReference type="GO" id="GO:0008289">
    <property type="term" value="F:lipid binding"/>
    <property type="evidence" value="ECO:0007669"/>
    <property type="project" value="UniProtKB-KW"/>
</dbReference>
<dbReference type="GO" id="GO:0006270">
    <property type="term" value="P:DNA replication initiation"/>
    <property type="evidence" value="ECO:0007669"/>
    <property type="project" value="UniProtKB-UniRule"/>
</dbReference>
<dbReference type="GO" id="GO:0006275">
    <property type="term" value="P:regulation of DNA replication"/>
    <property type="evidence" value="ECO:0007669"/>
    <property type="project" value="UniProtKB-UniRule"/>
</dbReference>
<dbReference type="CDD" id="cd00009">
    <property type="entry name" value="AAA"/>
    <property type="match status" value="1"/>
</dbReference>
<dbReference type="CDD" id="cd06571">
    <property type="entry name" value="Bac_DnaA_C"/>
    <property type="match status" value="1"/>
</dbReference>
<dbReference type="FunFam" id="3.40.50.300:FF:000668">
    <property type="entry name" value="Chromosomal replication initiator protein DnaA"/>
    <property type="match status" value="1"/>
</dbReference>
<dbReference type="Gene3D" id="1.10.1750.10">
    <property type="match status" value="1"/>
</dbReference>
<dbReference type="Gene3D" id="1.10.8.60">
    <property type="match status" value="1"/>
</dbReference>
<dbReference type="Gene3D" id="3.30.300.180">
    <property type="match status" value="1"/>
</dbReference>
<dbReference type="Gene3D" id="3.40.50.300">
    <property type="entry name" value="P-loop containing nucleotide triphosphate hydrolases"/>
    <property type="match status" value="1"/>
</dbReference>
<dbReference type="HAMAP" id="MF_00377">
    <property type="entry name" value="DnaA_bact"/>
    <property type="match status" value="1"/>
</dbReference>
<dbReference type="InterPro" id="IPR003593">
    <property type="entry name" value="AAA+_ATPase"/>
</dbReference>
<dbReference type="InterPro" id="IPR001957">
    <property type="entry name" value="Chromosome_initiator_DnaA"/>
</dbReference>
<dbReference type="InterPro" id="IPR020591">
    <property type="entry name" value="Chromosome_initiator_DnaA-like"/>
</dbReference>
<dbReference type="InterPro" id="IPR018312">
    <property type="entry name" value="Chromosome_initiator_DnaA_CS"/>
</dbReference>
<dbReference type="InterPro" id="IPR013159">
    <property type="entry name" value="DnaA_C"/>
</dbReference>
<dbReference type="InterPro" id="IPR013317">
    <property type="entry name" value="DnaA_dom"/>
</dbReference>
<dbReference type="InterPro" id="IPR024633">
    <property type="entry name" value="DnaA_N_dom"/>
</dbReference>
<dbReference type="InterPro" id="IPR038454">
    <property type="entry name" value="DnaA_N_sf"/>
</dbReference>
<dbReference type="InterPro" id="IPR027417">
    <property type="entry name" value="P-loop_NTPase"/>
</dbReference>
<dbReference type="InterPro" id="IPR010921">
    <property type="entry name" value="Trp_repressor/repl_initiator"/>
</dbReference>
<dbReference type="NCBIfam" id="TIGR00362">
    <property type="entry name" value="DnaA"/>
    <property type="match status" value="1"/>
</dbReference>
<dbReference type="PANTHER" id="PTHR30050">
    <property type="entry name" value="CHROMOSOMAL REPLICATION INITIATOR PROTEIN DNAA"/>
    <property type="match status" value="1"/>
</dbReference>
<dbReference type="PANTHER" id="PTHR30050:SF2">
    <property type="entry name" value="CHROMOSOMAL REPLICATION INITIATOR PROTEIN DNAA"/>
    <property type="match status" value="1"/>
</dbReference>
<dbReference type="Pfam" id="PF00308">
    <property type="entry name" value="Bac_DnaA"/>
    <property type="match status" value="1"/>
</dbReference>
<dbReference type="Pfam" id="PF08299">
    <property type="entry name" value="Bac_DnaA_C"/>
    <property type="match status" value="1"/>
</dbReference>
<dbReference type="Pfam" id="PF11638">
    <property type="entry name" value="DnaA_N"/>
    <property type="match status" value="1"/>
</dbReference>
<dbReference type="PRINTS" id="PR00051">
    <property type="entry name" value="DNAA"/>
</dbReference>
<dbReference type="SMART" id="SM00382">
    <property type="entry name" value="AAA"/>
    <property type="match status" value="1"/>
</dbReference>
<dbReference type="SMART" id="SM00760">
    <property type="entry name" value="Bac_DnaA_C"/>
    <property type="match status" value="1"/>
</dbReference>
<dbReference type="SUPFAM" id="SSF52540">
    <property type="entry name" value="P-loop containing nucleoside triphosphate hydrolases"/>
    <property type="match status" value="1"/>
</dbReference>
<dbReference type="SUPFAM" id="SSF48295">
    <property type="entry name" value="TrpR-like"/>
    <property type="match status" value="1"/>
</dbReference>
<dbReference type="PROSITE" id="PS01008">
    <property type="entry name" value="DNAA"/>
    <property type="match status" value="1"/>
</dbReference>